<dbReference type="EC" id="3.4.21.72"/>
<dbReference type="EMBL" id="M87490">
    <property type="protein sequence ID" value="AAA24967.1"/>
    <property type="molecule type" value="Genomic_DNA"/>
</dbReference>
<dbReference type="PIR" id="B41859">
    <property type="entry name" value="B41859"/>
</dbReference>
<dbReference type="RefSeq" id="WP_077643664.1">
    <property type="nucleotide sequence ID" value="NZ_CP082856.1"/>
</dbReference>
<dbReference type="SMR" id="P45385"/>
<dbReference type="MEROPS" id="S06.007"/>
<dbReference type="GO" id="GO:0009279">
    <property type="term" value="C:cell outer membrane"/>
    <property type="evidence" value="ECO:0007669"/>
    <property type="project" value="UniProtKB-SubCell"/>
</dbReference>
<dbReference type="GO" id="GO:0009986">
    <property type="term" value="C:cell surface"/>
    <property type="evidence" value="ECO:0007669"/>
    <property type="project" value="UniProtKB-SubCell"/>
</dbReference>
<dbReference type="GO" id="GO:0005576">
    <property type="term" value="C:extracellular region"/>
    <property type="evidence" value="ECO:0007669"/>
    <property type="project" value="UniProtKB-SubCell"/>
</dbReference>
<dbReference type="GO" id="GO:0042597">
    <property type="term" value="C:periplasmic space"/>
    <property type="evidence" value="ECO:0007669"/>
    <property type="project" value="UniProtKB-SubCell"/>
</dbReference>
<dbReference type="GO" id="GO:0004252">
    <property type="term" value="F:serine-type endopeptidase activity"/>
    <property type="evidence" value="ECO:0007669"/>
    <property type="project" value="InterPro"/>
</dbReference>
<dbReference type="GO" id="GO:0006508">
    <property type="term" value="P:proteolysis"/>
    <property type="evidence" value="ECO:0007669"/>
    <property type="project" value="UniProtKB-KW"/>
</dbReference>
<dbReference type="CDD" id="cd01343">
    <property type="entry name" value="PL1_Passenger_AT"/>
    <property type="match status" value="1"/>
</dbReference>
<dbReference type="Gene3D" id="2.160.20.20">
    <property type="match status" value="1"/>
</dbReference>
<dbReference type="Gene3D" id="2.40.10.120">
    <property type="match status" value="1"/>
</dbReference>
<dbReference type="Gene3D" id="3.30.160.280">
    <property type="match status" value="1"/>
</dbReference>
<dbReference type="Gene3D" id="4.10.1240.40">
    <property type="match status" value="1"/>
</dbReference>
<dbReference type="Gene3D" id="2.40.128.130">
    <property type="entry name" value="Autotransporter beta-domain"/>
    <property type="match status" value="1"/>
</dbReference>
<dbReference type="InterPro" id="IPR005546">
    <property type="entry name" value="Autotransporte_beta"/>
</dbReference>
<dbReference type="InterPro" id="IPR036709">
    <property type="entry name" value="Autotransporte_beta_dom_sf"/>
</dbReference>
<dbReference type="InterPro" id="IPR012332">
    <property type="entry name" value="Autotransporter_pectin_lyase_C"/>
</dbReference>
<dbReference type="InterPro" id="IPR050909">
    <property type="entry name" value="Bact_Autotransporter_VF"/>
</dbReference>
<dbReference type="InterPro" id="IPR011050">
    <property type="entry name" value="Pectin_lyase_fold/virulence"/>
</dbReference>
<dbReference type="InterPro" id="IPR000710">
    <property type="entry name" value="Peptidase_S6"/>
</dbReference>
<dbReference type="InterPro" id="IPR030396">
    <property type="entry name" value="Peptidase_S6_dom"/>
</dbReference>
<dbReference type="InterPro" id="IPR004899">
    <property type="entry name" value="Pertactin_central"/>
</dbReference>
<dbReference type="PANTHER" id="PTHR12338">
    <property type="entry name" value="AUTOTRANSPORTER"/>
    <property type="match status" value="1"/>
</dbReference>
<dbReference type="PANTHER" id="PTHR12338:SF9">
    <property type="entry name" value="IMMUNOGLOBULIN A1 PROTEASE AUTOTRANSPORTER"/>
    <property type="match status" value="1"/>
</dbReference>
<dbReference type="Pfam" id="PF03797">
    <property type="entry name" value="Autotransporter"/>
    <property type="match status" value="1"/>
</dbReference>
<dbReference type="Pfam" id="PF24078">
    <property type="entry name" value="Beta-sol_PIC_HAP1_IgA0_2nd"/>
    <property type="match status" value="1"/>
</dbReference>
<dbReference type="Pfam" id="PF24077">
    <property type="entry name" value="IgA0_D2"/>
    <property type="match status" value="1"/>
</dbReference>
<dbReference type="Pfam" id="PF02395">
    <property type="entry name" value="Peptidase_S6"/>
    <property type="match status" value="1"/>
</dbReference>
<dbReference type="Pfam" id="PF03212">
    <property type="entry name" value="Pertactin"/>
    <property type="match status" value="1"/>
</dbReference>
<dbReference type="PRINTS" id="PR00921">
    <property type="entry name" value="IGASERPTASE"/>
</dbReference>
<dbReference type="SMART" id="SM00869">
    <property type="entry name" value="Autotransporter"/>
    <property type="match status" value="1"/>
</dbReference>
<dbReference type="SUPFAM" id="SSF103515">
    <property type="entry name" value="Autotransporter"/>
    <property type="match status" value="1"/>
</dbReference>
<dbReference type="SUPFAM" id="SSF51126">
    <property type="entry name" value="Pectin lyase-like"/>
    <property type="match status" value="1"/>
</dbReference>
<dbReference type="PROSITE" id="PS51208">
    <property type="entry name" value="AUTOTRANSPORTER"/>
    <property type="match status" value="1"/>
</dbReference>
<dbReference type="PROSITE" id="PS51691">
    <property type="entry name" value="PEPTIDASE_S6"/>
    <property type="match status" value="1"/>
</dbReference>
<comment type="function">
    <text>Virulence factor; cleaves host immunoglobulin A producing intact Fc and Fab fragments.</text>
</comment>
<comment type="catalytic activity">
    <reaction>
        <text>Cleavage of immunoglobulin A molecules at certain Pro-|-Xaa bonds in the hinge region. No small molecule substrates are known.</text>
        <dbReference type="EC" id="3.4.21.72"/>
    </reaction>
</comment>
<comment type="subcellular location">
    <molecule>Immunoglobulin A1 protease autotransporter</molecule>
    <subcellularLocation>
        <location evidence="1">Periplasm</location>
    </subcellularLocation>
</comment>
<comment type="subcellular location">
    <molecule>Immunoglobulin A1 protease</molecule>
    <subcellularLocation>
        <location>Secreted</location>
    </subcellularLocation>
    <subcellularLocation>
        <location>Cell surface</location>
    </subcellularLocation>
</comment>
<comment type="subcellular location">
    <molecule>Immunoglobulin A1 protease translocator</molecule>
    <subcellularLocation>
        <location evidence="1">Cell outer membrane</location>
        <topology evidence="1">Multi-pass membrane protein</topology>
    </subcellularLocation>
    <text evidence="1">The cleaved C-terminal fragment (autotransporter domain) is localized in the outer membrane.</text>
</comment>
<comment type="domain">
    <text evidence="1">The signal peptide, cleaved at the inner membrane, guides the autotransporter protein to the periplasmic space. Then, insertion of the C-terminal translocator domain in the outer membrane forms a hydrophilic pore for the translocation of the passenger domain to the bacterial cell surface, with subsequent cleavage (By similarity).</text>
</comment>
<sequence>MLNKKFKLNFIALTVAYALTPYTEAALVRDDVDYQIFRDFAENKGKFSVGATNVEVRDKNNRPLGNVLPNGIPMIDFSVVDVDKRIATLVNPQYVVGVKHVSNGVSELHFGNLNGNMNNGNAKAHRDVSSEENRYYTVEKNEYPTKLNGKAVTTEDQAQKRREDYYMPRLDKFVTEVAPIEASTDSSTAGTYNNKDKYPYFVRLGSGTQFIYENGTRYELWLGKEGQKSDAGGYNLKLVGNAYTYGIAGTPYEVNHENDGLIGFGNSNNEYINPKEILSKKPLTNYAVLGDSGSPLFVYDREKGKWLFLGSYDYWAGYNKKSWQEWNIYKPEFAEKIYEQYSAGSLIGSKTDYSWSSNGKTSTITGGEKSLNVDLADGKDKPNHGKSVTFEGSGTLTLNNNIDQGAGGLFFEGDYEVKGTSDNTTWKGAGVSVAEGKTVTWKVHNPQYDRLAKIGKGTLIVEGTGDNKGSLKVGDGTVILKQQTNGSGQHAFASVGIVSGRSTLVLNDDKQVDPNSIYFGFRGGRLDLNGNSLTFDHIRNIDEGARLVNHSTSKHSTVTITGDNLITDPNNVSIYYVKPLEDDNPYAIRQIKYGYQLYFNEENRTYYALKKDASIRSEFPQNRGESNNSWLYMGTEKADAQKNAMNHINNERMNGFNGYFGEEEGKNNGNLNVTFKGKSEQNRFLLTGGTNLNGDLNVQQGTLFLSGRPTPHARDIAGISSTKKDSHFSENNEVVVEDDWINRNFKATNINVTNNATLYSGRNVESITSNITASNNAKVHIGYKAGDTVCVRSDYTGYVTCTTDKLSDKALNSFNPTNLRGNVNLTESANFVLGKANLFGTIQSRGNSQVRLTENSHWHLTGNSDVHQLDLANGHIHLNSADNSNNVTKYNTLTVNSLSGNGSFYYLTDLSNKQGDKVVVTKSATGNFTLQVADKTGEPNHNELTLFDASKAQRDHLNVSLVGNTVDLGAWKYKLRNVNGRYDLYNPEVEKRNQTVDTTNITTPNNIQADVPSVPSNNEEIARVDEAPVPPPAPATPSETTETVAENSKQESKTVEKNEQDATETTAQNREVAKEAKSNVKANTQTNEVAQSGSETKETQTTETKETATVEKEEKAKVETEKTQEVPKVTSQVSPKQEQSETVQPQAEPARENDPTVNIKEPQSQTNTTADTEQPAKETSSNVEQPVTESTTVNTGNSVVENPENTTPATTQPTVNSESSNKPKNRHRRSVRSVPHNVEPATTSSNDRSTVALCDLTSTNTNAVLSDARAKAQFVALNVGKAVSQHISQLEMNNEGQYNVWVSNTSMNKNYSSSQYRRFSSKSTQTQLGWDQTISNNVQLGGVFTYVRNSNNFDKATSKNTLAQVNFYSKYYADNHWYLGIDLGYGKFQSKLQTNHNAKFARHTAQFGLTAGKAFNLGNFGITPIVGVRYSYLSNADFALDQARIKVNPISVKTAFAQVDLSYTYHLGEFSVTPILSARYDANQGSGKINVNGYDFAYNVENQQQYNAGLKLKYHNVKLSLIGGLTKAKQAEKQKTAELKLSFSF</sequence>
<name>IGA3_HAEIF</name>
<accession>P45385</accession>
<keyword id="KW-0998">Cell outer membrane</keyword>
<keyword id="KW-0378">Hydrolase</keyword>
<keyword id="KW-0472">Membrane</keyword>
<keyword id="KW-0574">Periplasm</keyword>
<keyword id="KW-0645">Protease</keyword>
<keyword id="KW-0964">Secreted</keyword>
<keyword id="KW-0720">Serine protease</keyword>
<keyword id="KW-0732">Signal</keyword>
<keyword id="KW-0812">Transmembrane</keyword>
<keyword id="KW-1134">Transmembrane beta strand</keyword>
<keyword id="KW-0843">Virulence</keyword>
<keyword id="KW-0865">Zymogen</keyword>
<feature type="signal peptide" evidence="2">
    <location>
        <begin position="1"/>
        <end position="25"/>
    </location>
</feature>
<feature type="chain" id="PRO_0000387601" description="Immunoglobulin A1 protease autotransporter">
    <location>
        <begin position="26"/>
        <end position="1545"/>
    </location>
</feature>
<feature type="chain" id="PRO_0000026964" description="Immunoglobulin A1 protease">
    <location>
        <begin position="26"/>
        <end position="1012"/>
    </location>
</feature>
<feature type="chain" id="PRO_0000026965" description="Immunoglobulin A1 protease translocator" evidence="2">
    <location>
        <begin position="1013"/>
        <end position="1545"/>
    </location>
</feature>
<feature type="domain" description="Peptidase S6" evidence="4">
    <location>
        <begin position="26"/>
        <end position="336"/>
    </location>
</feature>
<feature type="domain" description="Autotransporter" evidence="3">
    <location>
        <begin position="1293"/>
        <end position="1545"/>
    </location>
</feature>
<feature type="region of interest" description="Disordered" evidence="5">
    <location>
        <begin position="995"/>
        <end position="1246"/>
    </location>
</feature>
<feature type="compositionally biased region" description="Polar residues" evidence="5">
    <location>
        <begin position="995"/>
        <end position="1019"/>
    </location>
</feature>
<feature type="compositionally biased region" description="Low complexity" evidence="5">
    <location>
        <begin position="1036"/>
        <end position="1046"/>
    </location>
</feature>
<feature type="compositionally biased region" description="Basic and acidic residues" evidence="5">
    <location>
        <begin position="1048"/>
        <end position="1060"/>
    </location>
</feature>
<feature type="compositionally biased region" description="Polar residues" evidence="5">
    <location>
        <begin position="1080"/>
        <end position="1094"/>
    </location>
</feature>
<feature type="compositionally biased region" description="Basic and acidic residues" evidence="5">
    <location>
        <begin position="1095"/>
        <end position="1125"/>
    </location>
</feature>
<feature type="compositionally biased region" description="Polar residues" evidence="5">
    <location>
        <begin position="1129"/>
        <end position="1145"/>
    </location>
</feature>
<feature type="compositionally biased region" description="Polar residues" evidence="5">
    <location>
        <begin position="1161"/>
        <end position="1222"/>
    </location>
</feature>
<feature type="active site" evidence="6">
    <location>
        <position position="292"/>
    </location>
</feature>
<gene>
    <name type="primary">iga</name>
</gene>
<evidence type="ECO:0000250" key="1"/>
<evidence type="ECO:0000255" key="2"/>
<evidence type="ECO:0000255" key="3">
    <source>
        <dbReference type="PROSITE-ProRule" id="PRU00556"/>
    </source>
</evidence>
<evidence type="ECO:0000255" key="4">
    <source>
        <dbReference type="PROSITE-ProRule" id="PRU01028"/>
    </source>
</evidence>
<evidence type="ECO:0000256" key="5">
    <source>
        <dbReference type="SAM" id="MobiDB-lite"/>
    </source>
</evidence>
<evidence type="ECO:0000305" key="6"/>
<proteinExistence type="inferred from homology"/>
<reference key="1">
    <citation type="journal article" date="1992" name="J. Bacteriol.">
        <title>A comparative genetic study of serologically distinct Haemophilus influenzae type 1 immunoglobulin A1 proteases.</title>
        <authorList>
            <person name="Poulsen K."/>
            <person name="Reinholdt J."/>
            <person name="Kilian M."/>
        </authorList>
    </citation>
    <scope>NUCLEOTIDE SEQUENCE [GENOMIC DNA]</scope>
    <source>
        <strain>HK393 / NCTC 8467 / ATCC 9795 / DSM 10001 / AMC 36-A-4 / Serotype B</strain>
    </source>
</reference>
<protein>
    <recommendedName>
        <fullName>Immunoglobulin A1 protease autotransporter</fullName>
        <ecNumber>3.4.21.72</ecNumber>
    </recommendedName>
    <component>
        <recommendedName>
            <fullName>Immunoglobulin A1 protease</fullName>
            <shortName>IGA1 protease</shortName>
        </recommendedName>
    </component>
    <component>
        <recommendedName>
            <fullName>Immunoglobulin A1 protease translocator</fullName>
        </recommendedName>
        <alternativeName>
            <fullName>Helper peptide</fullName>
        </alternativeName>
    </component>
</protein>
<organism>
    <name type="scientific">Haemophilus influenzae</name>
    <dbReference type="NCBI Taxonomy" id="727"/>
    <lineage>
        <taxon>Bacteria</taxon>
        <taxon>Pseudomonadati</taxon>
        <taxon>Pseudomonadota</taxon>
        <taxon>Gammaproteobacteria</taxon>
        <taxon>Pasteurellales</taxon>
        <taxon>Pasteurellaceae</taxon>
        <taxon>Haemophilus</taxon>
    </lineage>
</organism>